<evidence type="ECO:0000255" key="1">
    <source>
        <dbReference type="HAMAP-Rule" id="MF_01694"/>
    </source>
</evidence>
<evidence type="ECO:0000255" key="2">
    <source>
        <dbReference type="PROSITE-ProRule" id="PRU01266"/>
    </source>
</evidence>
<reference key="1">
    <citation type="journal article" date="2008" name="PLoS Genet.">
        <title>Complete genome sequence of the complex carbohydrate-degrading marine bacterium, Saccharophagus degradans strain 2-40 T.</title>
        <authorList>
            <person name="Weiner R.M."/>
            <person name="Taylor L.E. II"/>
            <person name="Henrissat B."/>
            <person name="Hauser L."/>
            <person name="Land M."/>
            <person name="Coutinho P.M."/>
            <person name="Rancurel C."/>
            <person name="Saunders E.H."/>
            <person name="Longmire A.G."/>
            <person name="Zhang H."/>
            <person name="Bayer E.A."/>
            <person name="Gilbert H.J."/>
            <person name="Larimer F."/>
            <person name="Zhulin I.B."/>
            <person name="Ekborg N.A."/>
            <person name="Lamed R."/>
            <person name="Richardson P.M."/>
            <person name="Borovok I."/>
            <person name="Hutcheson S."/>
        </authorList>
    </citation>
    <scope>NUCLEOTIDE SEQUENCE [LARGE SCALE GENOMIC DNA]</scope>
    <source>
        <strain>2-40 / ATCC 43961 / DSM 17024</strain>
    </source>
</reference>
<feature type="chain" id="PRO_0000381592" description="Biotin synthase">
    <location>
        <begin position="1"/>
        <end position="350"/>
    </location>
</feature>
<feature type="domain" description="Radical SAM core" evidence="2">
    <location>
        <begin position="42"/>
        <end position="269"/>
    </location>
</feature>
<feature type="binding site" evidence="1">
    <location>
        <position position="57"/>
    </location>
    <ligand>
        <name>[4Fe-4S] cluster</name>
        <dbReference type="ChEBI" id="CHEBI:49883"/>
        <note>4Fe-4S-S-AdoMet</note>
    </ligand>
</feature>
<feature type="binding site" evidence="1">
    <location>
        <position position="61"/>
    </location>
    <ligand>
        <name>[4Fe-4S] cluster</name>
        <dbReference type="ChEBI" id="CHEBI:49883"/>
        <note>4Fe-4S-S-AdoMet</note>
    </ligand>
</feature>
<feature type="binding site" evidence="1">
    <location>
        <position position="64"/>
    </location>
    <ligand>
        <name>[4Fe-4S] cluster</name>
        <dbReference type="ChEBI" id="CHEBI:49883"/>
        <note>4Fe-4S-S-AdoMet</note>
    </ligand>
</feature>
<feature type="binding site" evidence="1">
    <location>
        <position position="101"/>
    </location>
    <ligand>
        <name>[2Fe-2S] cluster</name>
        <dbReference type="ChEBI" id="CHEBI:190135"/>
    </ligand>
</feature>
<feature type="binding site" evidence="1">
    <location>
        <position position="132"/>
    </location>
    <ligand>
        <name>[2Fe-2S] cluster</name>
        <dbReference type="ChEBI" id="CHEBI:190135"/>
    </ligand>
</feature>
<feature type="binding site" evidence="1">
    <location>
        <position position="192"/>
    </location>
    <ligand>
        <name>[2Fe-2S] cluster</name>
        <dbReference type="ChEBI" id="CHEBI:190135"/>
    </ligand>
</feature>
<feature type="binding site" evidence="1">
    <location>
        <position position="264"/>
    </location>
    <ligand>
        <name>[2Fe-2S] cluster</name>
        <dbReference type="ChEBI" id="CHEBI:190135"/>
    </ligand>
</feature>
<gene>
    <name evidence="1" type="primary">bioB</name>
    <name type="ordered locus">Sde_3139</name>
</gene>
<comment type="function">
    <text evidence="1">Catalyzes the conversion of dethiobiotin (DTB) to biotin by the insertion of a sulfur atom into dethiobiotin via a radical-based mechanism.</text>
</comment>
<comment type="catalytic activity">
    <reaction evidence="1">
        <text>(4R,5S)-dethiobiotin + (sulfur carrier)-SH + 2 reduced [2Fe-2S]-[ferredoxin] + 2 S-adenosyl-L-methionine = (sulfur carrier)-H + biotin + 2 5'-deoxyadenosine + 2 L-methionine + 2 oxidized [2Fe-2S]-[ferredoxin]</text>
        <dbReference type="Rhea" id="RHEA:22060"/>
        <dbReference type="Rhea" id="RHEA-COMP:10000"/>
        <dbReference type="Rhea" id="RHEA-COMP:10001"/>
        <dbReference type="Rhea" id="RHEA-COMP:14737"/>
        <dbReference type="Rhea" id="RHEA-COMP:14739"/>
        <dbReference type="ChEBI" id="CHEBI:17319"/>
        <dbReference type="ChEBI" id="CHEBI:29917"/>
        <dbReference type="ChEBI" id="CHEBI:33737"/>
        <dbReference type="ChEBI" id="CHEBI:33738"/>
        <dbReference type="ChEBI" id="CHEBI:57586"/>
        <dbReference type="ChEBI" id="CHEBI:57844"/>
        <dbReference type="ChEBI" id="CHEBI:59789"/>
        <dbReference type="ChEBI" id="CHEBI:64428"/>
        <dbReference type="ChEBI" id="CHEBI:149473"/>
        <dbReference type="EC" id="2.8.1.6"/>
    </reaction>
</comment>
<comment type="cofactor">
    <cofactor evidence="1">
        <name>[4Fe-4S] cluster</name>
        <dbReference type="ChEBI" id="CHEBI:49883"/>
    </cofactor>
    <text evidence="1">Binds 1 [4Fe-4S] cluster. The cluster is coordinated with 3 cysteines and an exchangeable S-adenosyl-L-methionine.</text>
</comment>
<comment type="cofactor">
    <cofactor evidence="1">
        <name>[2Fe-2S] cluster</name>
        <dbReference type="ChEBI" id="CHEBI:190135"/>
    </cofactor>
    <text evidence="1">Binds 1 [2Fe-2S] cluster. The cluster is coordinated with 3 cysteines and 1 arginine.</text>
</comment>
<comment type="pathway">
    <text evidence="1">Cofactor biosynthesis; biotin biosynthesis; biotin from 7,8-diaminononanoate: step 2/2.</text>
</comment>
<comment type="subunit">
    <text evidence="1">Homodimer.</text>
</comment>
<comment type="similarity">
    <text evidence="1">Belongs to the radical SAM superfamily. Biotin synthase family.</text>
</comment>
<dbReference type="EC" id="2.8.1.6" evidence="1"/>
<dbReference type="EMBL" id="CP000282">
    <property type="protein sequence ID" value="ABD82396.1"/>
    <property type="molecule type" value="Genomic_DNA"/>
</dbReference>
<dbReference type="RefSeq" id="WP_011469612.1">
    <property type="nucleotide sequence ID" value="NC_007912.1"/>
</dbReference>
<dbReference type="SMR" id="Q21FY3"/>
<dbReference type="STRING" id="203122.Sde_3139"/>
<dbReference type="GeneID" id="98614768"/>
<dbReference type="KEGG" id="sde:Sde_3139"/>
<dbReference type="eggNOG" id="COG0502">
    <property type="taxonomic scope" value="Bacteria"/>
</dbReference>
<dbReference type="HOGENOM" id="CLU_033172_1_2_6"/>
<dbReference type="OrthoDB" id="9786826at2"/>
<dbReference type="UniPathway" id="UPA00078">
    <property type="reaction ID" value="UER00162"/>
</dbReference>
<dbReference type="Proteomes" id="UP000001947">
    <property type="component" value="Chromosome"/>
</dbReference>
<dbReference type="GO" id="GO:0051537">
    <property type="term" value="F:2 iron, 2 sulfur cluster binding"/>
    <property type="evidence" value="ECO:0007669"/>
    <property type="project" value="UniProtKB-KW"/>
</dbReference>
<dbReference type="GO" id="GO:0051539">
    <property type="term" value="F:4 iron, 4 sulfur cluster binding"/>
    <property type="evidence" value="ECO:0007669"/>
    <property type="project" value="UniProtKB-KW"/>
</dbReference>
<dbReference type="GO" id="GO:0004076">
    <property type="term" value="F:biotin synthase activity"/>
    <property type="evidence" value="ECO:0007669"/>
    <property type="project" value="UniProtKB-UniRule"/>
</dbReference>
<dbReference type="GO" id="GO:0005506">
    <property type="term" value="F:iron ion binding"/>
    <property type="evidence" value="ECO:0007669"/>
    <property type="project" value="UniProtKB-UniRule"/>
</dbReference>
<dbReference type="GO" id="GO:0009102">
    <property type="term" value="P:biotin biosynthetic process"/>
    <property type="evidence" value="ECO:0007669"/>
    <property type="project" value="UniProtKB-UniRule"/>
</dbReference>
<dbReference type="CDD" id="cd01335">
    <property type="entry name" value="Radical_SAM"/>
    <property type="match status" value="1"/>
</dbReference>
<dbReference type="FunFam" id="3.20.20.70:FF:000011">
    <property type="entry name" value="Biotin synthase"/>
    <property type="match status" value="1"/>
</dbReference>
<dbReference type="Gene3D" id="3.20.20.70">
    <property type="entry name" value="Aldolase class I"/>
    <property type="match status" value="1"/>
</dbReference>
<dbReference type="HAMAP" id="MF_01694">
    <property type="entry name" value="BioB"/>
    <property type="match status" value="1"/>
</dbReference>
<dbReference type="InterPro" id="IPR013785">
    <property type="entry name" value="Aldolase_TIM"/>
</dbReference>
<dbReference type="InterPro" id="IPR010722">
    <property type="entry name" value="BATS_dom"/>
</dbReference>
<dbReference type="InterPro" id="IPR002684">
    <property type="entry name" value="Biotin_synth/BioAB"/>
</dbReference>
<dbReference type="InterPro" id="IPR024177">
    <property type="entry name" value="Biotin_synthase"/>
</dbReference>
<dbReference type="InterPro" id="IPR006638">
    <property type="entry name" value="Elp3/MiaA/NifB-like_rSAM"/>
</dbReference>
<dbReference type="InterPro" id="IPR007197">
    <property type="entry name" value="rSAM"/>
</dbReference>
<dbReference type="NCBIfam" id="TIGR00433">
    <property type="entry name" value="bioB"/>
    <property type="match status" value="1"/>
</dbReference>
<dbReference type="PANTHER" id="PTHR22976">
    <property type="entry name" value="BIOTIN SYNTHASE"/>
    <property type="match status" value="1"/>
</dbReference>
<dbReference type="PANTHER" id="PTHR22976:SF2">
    <property type="entry name" value="BIOTIN SYNTHASE, MITOCHONDRIAL"/>
    <property type="match status" value="1"/>
</dbReference>
<dbReference type="Pfam" id="PF06968">
    <property type="entry name" value="BATS"/>
    <property type="match status" value="1"/>
</dbReference>
<dbReference type="Pfam" id="PF04055">
    <property type="entry name" value="Radical_SAM"/>
    <property type="match status" value="1"/>
</dbReference>
<dbReference type="PIRSF" id="PIRSF001619">
    <property type="entry name" value="Biotin_synth"/>
    <property type="match status" value="1"/>
</dbReference>
<dbReference type="SFLD" id="SFLDF00272">
    <property type="entry name" value="biotin_synthase"/>
    <property type="match status" value="1"/>
</dbReference>
<dbReference type="SFLD" id="SFLDG01278">
    <property type="entry name" value="biotin_synthase_like"/>
    <property type="match status" value="1"/>
</dbReference>
<dbReference type="SMART" id="SM00876">
    <property type="entry name" value="BATS"/>
    <property type="match status" value="1"/>
</dbReference>
<dbReference type="SMART" id="SM00729">
    <property type="entry name" value="Elp3"/>
    <property type="match status" value="1"/>
</dbReference>
<dbReference type="SUPFAM" id="SSF102114">
    <property type="entry name" value="Radical SAM enzymes"/>
    <property type="match status" value="1"/>
</dbReference>
<dbReference type="PROSITE" id="PS51918">
    <property type="entry name" value="RADICAL_SAM"/>
    <property type="match status" value="1"/>
</dbReference>
<accession>Q21FY3</accession>
<proteinExistence type="inferred from homology"/>
<sequence>MSNPSLVRSNWTRKEVEALFALPFNDLLFEAQTIHRQFFNANEVQVSTLCSIKTGACPEDCAYCPQSARYDTGLEREKLMAVEKVLEEAKAAKDSGATRFCMGAAWRSPKKKDMPYVTAMVKGVKEMGLEACMTLGMIDKDQATELAEAGLDYYNHNLDTSPEYYGDIITTRTYQDRLDTLDNVRHAGMKVCCGGIMGMGEDESDRVGLLLQLANMPQHPESVPINMLVAVEGTPLEQQEALDPFDFIRTIAVARILMPQSHVRLSAGREDMNDQTQALAFHAGANSIFYGEKLLTTANPESNKDMQLFKRLGINPEKREEHKTEQEQVEQINQQVAEAALDKVFYNAAS</sequence>
<keyword id="KW-0001">2Fe-2S</keyword>
<keyword id="KW-0004">4Fe-4S</keyword>
<keyword id="KW-0093">Biotin biosynthesis</keyword>
<keyword id="KW-0408">Iron</keyword>
<keyword id="KW-0411">Iron-sulfur</keyword>
<keyword id="KW-0479">Metal-binding</keyword>
<keyword id="KW-1185">Reference proteome</keyword>
<keyword id="KW-0949">S-adenosyl-L-methionine</keyword>
<keyword id="KW-0808">Transferase</keyword>
<organism>
    <name type="scientific">Saccharophagus degradans (strain 2-40 / ATCC 43961 / DSM 17024)</name>
    <dbReference type="NCBI Taxonomy" id="203122"/>
    <lineage>
        <taxon>Bacteria</taxon>
        <taxon>Pseudomonadati</taxon>
        <taxon>Pseudomonadota</taxon>
        <taxon>Gammaproteobacteria</taxon>
        <taxon>Cellvibrionales</taxon>
        <taxon>Cellvibrionaceae</taxon>
        <taxon>Saccharophagus</taxon>
    </lineage>
</organism>
<protein>
    <recommendedName>
        <fullName evidence="1">Biotin synthase</fullName>
        <ecNumber evidence="1">2.8.1.6</ecNumber>
    </recommendedName>
</protein>
<name>BIOB_SACD2</name>